<feature type="chain" id="PRO_0000255176" description="Lipid-A-disaccharide synthase">
    <location>
        <begin position="1"/>
        <end position="382"/>
    </location>
</feature>
<comment type="function">
    <text evidence="1">Condensation of UDP-2,3-diacylglucosamine and 2,3-diacylglucosamine-1-phosphate to form lipid A disaccharide, a precursor of lipid A, a phosphorylated glycolipid that anchors the lipopolysaccharide to the outer membrane of the cell.</text>
</comment>
<comment type="catalytic activity">
    <reaction evidence="1">
        <text>a lipid X + a UDP-2-N,3-O-bis[(3R)-3-hydroxyacyl]-alpha-D-glucosamine = a lipid A disaccharide + UDP + H(+)</text>
        <dbReference type="Rhea" id="RHEA:67828"/>
        <dbReference type="ChEBI" id="CHEBI:15378"/>
        <dbReference type="ChEBI" id="CHEBI:58223"/>
        <dbReference type="ChEBI" id="CHEBI:137748"/>
        <dbReference type="ChEBI" id="CHEBI:176338"/>
        <dbReference type="ChEBI" id="CHEBI:176343"/>
        <dbReference type="EC" id="2.4.1.182"/>
    </reaction>
</comment>
<comment type="pathway">
    <text evidence="1">Bacterial outer membrane biogenesis; LPS lipid A biosynthesis.</text>
</comment>
<comment type="similarity">
    <text evidence="1">Belongs to the LpxB family.</text>
</comment>
<accession>Q47F79</accession>
<reference key="1">
    <citation type="journal article" date="2009" name="BMC Genomics">
        <title>Metabolic analysis of the soil microbe Dechloromonas aromatica str. RCB: indications of a surprisingly complex life-style and cryptic anaerobic pathways for aromatic degradation.</title>
        <authorList>
            <person name="Salinero K.K."/>
            <person name="Keller K."/>
            <person name="Feil W.S."/>
            <person name="Feil H."/>
            <person name="Trong S."/>
            <person name="Di Bartolo G."/>
            <person name="Lapidus A."/>
        </authorList>
    </citation>
    <scope>NUCLEOTIDE SEQUENCE [LARGE SCALE GENOMIC DNA]</scope>
    <source>
        <strain>RCB</strain>
    </source>
</reference>
<protein>
    <recommendedName>
        <fullName evidence="1">Lipid-A-disaccharide synthase</fullName>
        <ecNumber evidence="1">2.4.1.182</ecNumber>
    </recommendedName>
</protein>
<sequence>MGSAVRIAMVAGEASGDLLASHLIAALKTHLPDAVFYGIGGPKMQAQGFDSWWPMEKLSVMGYWDALKHYREIAGIRRQLKKRLLDLKPDIFIGVDAPDFNLGLETNLKAAGVRTIHYVSPSIWAWRGGRVKKIAKAVNRVLALFPMEPALYEKERVPVTYVGHPLADIIPLQTSKQAVREKLSLPRDYPIFAMLPGSRQGELAMMAETFVETAKIIRERHLPNAMFVVPLATRETRLQFELAIYNRQAGDVPFRLLFGHAQDALGAADVSLVASGTATLEAALIKRPMVITYKIAKFSYWLMKRMAYLPYVGLPNVLAGRFVVPEILQDEATPENLAEALVKLYEDKENAEAVEEAFTEIHLQLRQNTAEKAARAVIECLN</sequence>
<keyword id="KW-0328">Glycosyltransferase</keyword>
<keyword id="KW-0441">Lipid A biosynthesis</keyword>
<keyword id="KW-0444">Lipid biosynthesis</keyword>
<keyword id="KW-0443">Lipid metabolism</keyword>
<keyword id="KW-0808">Transferase</keyword>
<proteinExistence type="inferred from homology"/>
<organism>
    <name type="scientific">Dechloromonas aromatica (strain RCB)</name>
    <dbReference type="NCBI Taxonomy" id="159087"/>
    <lineage>
        <taxon>Bacteria</taxon>
        <taxon>Pseudomonadati</taxon>
        <taxon>Pseudomonadota</taxon>
        <taxon>Betaproteobacteria</taxon>
        <taxon>Rhodocyclales</taxon>
        <taxon>Azonexaceae</taxon>
        <taxon>Dechloromonas</taxon>
    </lineage>
</organism>
<name>LPXB_DECAR</name>
<gene>
    <name evidence="1" type="primary">lpxB</name>
    <name type="ordered locus">Daro_1755</name>
</gene>
<dbReference type="EC" id="2.4.1.182" evidence="1"/>
<dbReference type="EMBL" id="CP000089">
    <property type="protein sequence ID" value="AAZ46502.1"/>
    <property type="molecule type" value="Genomic_DNA"/>
</dbReference>
<dbReference type="SMR" id="Q47F79"/>
<dbReference type="STRING" id="159087.Daro_1755"/>
<dbReference type="CAZy" id="GT19">
    <property type="family name" value="Glycosyltransferase Family 19"/>
</dbReference>
<dbReference type="KEGG" id="dar:Daro_1755"/>
<dbReference type="eggNOG" id="COG0763">
    <property type="taxonomic scope" value="Bacteria"/>
</dbReference>
<dbReference type="HOGENOM" id="CLU_036577_3_0_4"/>
<dbReference type="OrthoDB" id="9801642at2"/>
<dbReference type="UniPathway" id="UPA00973"/>
<dbReference type="GO" id="GO:0016020">
    <property type="term" value="C:membrane"/>
    <property type="evidence" value="ECO:0007669"/>
    <property type="project" value="GOC"/>
</dbReference>
<dbReference type="GO" id="GO:0008915">
    <property type="term" value="F:lipid-A-disaccharide synthase activity"/>
    <property type="evidence" value="ECO:0007669"/>
    <property type="project" value="UniProtKB-UniRule"/>
</dbReference>
<dbReference type="GO" id="GO:0005543">
    <property type="term" value="F:phospholipid binding"/>
    <property type="evidence" value="ECO:0007669"/>
    <property type="project" value="TreeGrafter"/>
</dbReference>
<dbReference type="GO" id="GO:0009245">
    <property type="term" value="P:lipid A biosynthetic process"/>
    <property type="evidence" value="ECO:0007669"/>
    <property type="project" value="UniProtKB-UniRule"/>
</dbReference>
<dbReference type="HAMAP" id="MF_00392">
    <property type="entry name" value="LpxB"/>
    <property type="match status" value="1"/>
</dbReference>
<dbReference type="InterPro" id="IPR003835">
    <property type="entry name" value="Glyco_trans_19"/>
</dbReference>
<dbReference type="NCBIfam" id="TIGR00215">
    <property type="entry name" value="lpxB"/>
    <property type="match status" value="1"/>
</dbReference>
<dbReference type="PANTHER" id="PTHR30372">
    <property type="entry name" value="LIPID-A-DISACCHARIDE SYNTHASE"/>
    <property type="match status" value="1"/>
</dbReference>
<dbReference type="PANTHER" id="PTHR30372:SF4">
    <property type="entry name" value="LIPID-A-DISACCHARIDE SYNTHASE, MITOCHONDRIAL-RELATED"/>
    <property type="match status" value="1"/>
</dbReference>
<dbReference type="Pfam" id="PF02684">
    <property type="entry name" value="LpxB"/>
    <property type="match status" value="1"/>
</dbReference>
<dbReference type="SUPFAM" id="SSF53756">
    <property type="entry name" value="UDP-Glycosyltransferase/glycogen phosphorylase"/>
    <property type="match status" value="1"/>
</dbReference>
<evidence type="ECO:0000255" key="1">
    <source>
        <dbReference type="HAMAP-Rule" id="MF_00392"/>
    </source>
</evidence>